<accession>P0C2L3</accession>
<accession>B2RUZ5</accession>
<protein>
    <recommendedName>
        <fullName>Protein FAM163B</fullName>
    </recommendedName>
</protein>
<gene>
    <name type="primary">FAM163B</name>
    <name type="synonym">C9orf166</name>
</gene>
<organism>
    <name type="scientific">Homo sapiens</name>
    <name type="common">Human</name>
    <dbReference type="NCBI Taxonomy" id="9606"/>
    <lineage>
        <taxon>Eukaryota</taxon>
        <taxon>Metazoa</taxon>
        <taxon>Chordata</taxon>
        <taxon>Craniata</taxon>
        <taxon>Vertebrata</taxon>
        <taxon>Euteleostomi</taxon>
        <taxon>Mammalia</taxon>
        <taxon>Eutheria</taxon>
        <taxon>Euarchontoglires</taxon>
        <taxon>Primates</taxon>
        <taxon>Haplorrhini</taxon>
        <taxon>Catarrhini</taxon>
        <taxon>Hominidae</taxon>
        <taxon>Homo</taxon>
    </lineage>
</organism>
<reference key="1">
    <citation type="journal article" date="2004" name="Nature">
        <title>DNA sequence and analysis of human chromosome 9.</title>
        <authorList>
            <person name="Humphray S.J."/>
            <person name="Oliver K."/>
            <person name="Hunt A.R."/>
            <person name="Plumb R.W."/>
            <person name="Loveland J.E."/>
            <person name="Howe K.L."/>
            <person name="Andrews T.D."/>
            <person name="Searle S."/>
            <person name="Hunt S.E."/>
            <person name="Scott C.E."/>
            <person name="Jones M.C."/>
            <person name="Ainscough R."/>
            <person name="Almeida J.P."/>
            <person name="Ambrose K.D."/>
            <person name="Ashwell R.I.S."/>
            <person name="Babbage A.K."/>
            <person name="Babbage S."/>
            <person name="Bagguley C.L."/>
            <person name="Bailey J."/>
            <person name="Banerjee R."/>
            <person name="Barker D.J."/>
            <person name="Barlow K.F."/>
            <person name="Bates K."/>
            <person name="Beasley H."/>
            <person name="Beasley O."/>
            <person name="Bird C.P."/>
            <person name="Bray-Allen S."/>
            <person name="Brown A.J."/>
            <person name="Brown J.Y."/>
            <person name="Burford D."/>
            <person name="Burrill W."/>
            <person name="Burton J."/>
            <person name="Carder C."/>
            <person name="Carter N.P."/>
            <person name="Chapman J.C."/>
            <person name="Chen Y."/>
            <person name="Clarke G."/>
            <person name="Clark S.Y."/>
            <person name="Clee C.M."/>
            <person name="Clegg S."/>
            <person name="Collier R.E."/>
            <person name="Corby N."/>
            <person name="Crosier M."/>
            <person name="Cummings A.T."/>
            <person name="Davies J."/>
            <person name="Dhami P."/>
            <person name="Dunn M."/>
            <person name="Dutta I."/>
            <person name="Dyer L.W."/>
            <person name="Earthrowl M.E."/>
            <person name="Faulkner L."/>
            <person name="Fleming C.J."/>
            <person name="Frankish A."/>
            <person name="Frankland J.A."/>
            <person name="French L."/>
            <person name="Fricker D.G."/>
            <person name="Garner P."/>
            <person name="Garnett J."/>
            <person name="Ghori J."/>
            <person name="Gilbert J.G.R."/>
            <person name="Glison C."/>
            <person name="Grafham D.V."/>
            <person name="Gribble S."/>
            <person name="Griffiths C."/>
            <person name="Griffiths-Jones S."/>
            <person name="Grocock R."/>
            <person name="Guy J."/>
            <person name="Hall R.E."/>
            <person name="Hammond S."/>
            <person name="Harley J.L."/>
            <person name="Harrison E.S.I."/>
            <person name="Hart E.A."/>
            <person name="Heath P.D."/>
            <person name="Henderson C.D."/>
            <person name="Hopkins B.L."/>
            <person name="Howard P.J."/>
            <person name="Howden P.J."/>
            <person name="Huckle E."/>
            <person name="Johnson C."/>
            <person name="Johnson D."/>
            <person name="Joy A.A."/>
            <person name="Kay M."/>
            <person name="Keenan S."/>
            <person name="Kershaw J.K."/>
            <person name="Kimberley A.M."/>
            <person name="King A."/>
            <person name="Knights A."/>
            <person name="Laird G.K."/>
            <person name="Langford C."/>
            <person name="Lawlor S."/>
            <person name="Leongamornlert D.A."/>
            <person name="Leversha M."/>
            <person name="Lloyd C."/>
            <person name="Lloyd D.M."/>
            <person name="Lovell J."/>
            <person name="Martin S."/>
            <person name="Mashreghi-Mohammadi M."/>
            <person name="Matthews L."/>
            <person name="McLaren S."/>
            <person name="McLay K.E."/>
            <person name="McMurray A."/>
            <person name="Milne S."/>
            <person name="Nickerson T."/>
            <person name="Nisbett J."/>
            <person name="Nordsiek G."/>
            <person name="Pearce A.V."/>
            <person name="Peck A.I."/>
            <person name="Porter K.M."/>
            <person name="Pandian R."/>
            <person name="Pelan S."/>
            <person name="Phillimore B."/>
            <person name="Povey S."/>
            <person name="Ramsey Y."/>
            <person name="Rand V."/>
            <person name="Scharfe M."/>
            <person name="Sehra H.K."/>
            <person name="Shownkeen R."/>
            <person name="Sims S.K."/>
            <person name="Skuce C.D."/>
            <person name="Smith M."/>
            <person name="Steward C.A."/>
            <person name="Swarbreck D."/>
            <person name="Sycamore N."/>
            <person name="Tester J."/>
            <person name="Thorpe A."/>
            <person name="Tracey A."/>
            <person name="Tromans A."/>
            <person name="Thomas D.W."/>
            <person name="Wall M."/>
            <person name="Wallis J.M."/>
            <person name="West A.P."/>
            <person name="Whitehead S.L."/>
            <person name="Willey D.L."/>
            <person name="Williams S.A."/>
            <person name="Wilming L."/>
            <person name="Wray P.W."/>
            <person name="Young L."/>
            <person name="Ashurst J.L."/>
            <person name="Coulson A."/>
            <person name="Blocker H."/>
            <person name="Durbin R.M."/>
            <person name="Sulston J.E."/>
            <person name="Hubbard T."/>
            <person name="Jackson M.J."/>
            <person name="Bentley D.R."/>
            <person name="Beck S."/>
            <person name="Rogers J."/>
            <person name="Dunham I."/>
        </authorList>
    </citation>
    <scope>NUCLEOTIDE SEQUENCE [LARGE SCALE GENOMIC DNA]</scope>
</reference>
<reference key="2">
    <citation type="journal article" date="2004" name="Genome Res.">
        <title>The status, quality, and expansion of the NIH full-length cDNA project: the Mammalian Gene Collection (MGC).</title>
        <authorList>
            <consortium name="The MGC Project Team"/>
        </authorList>
    </citation>
    <scope>NUCLEOTIDE SEQUENCE [LARGE SCALE MRNA]</scope>
</reference>
<name>F163B_HUMAN</name>
<evidence type="ECO:0000250" key="1">
    <source>
        <dbReference type="UniProtKB" id="Q8BUM6"/>
    </source>
</evidence>
<evidence type="ECO:0000255" key="2"/>
<evidence type="ECO:0000305" key="3"/>
<feature type="chain" id="PRO_0000280258" description="Protein FAM163B">
    <location>
        <begin position="1"/>
        <end position="166"/>
    </location>
</feature>
<feature type="transmembrane region" description="Helical" evidence="2">
    <location>
        <begin position="6"/>
        <end position="26"/>
    </location>
</feature>
<feature type="modified residue" description="Phosphoserine" evidence="1">
    <location>
        <position position="40"/>
    </location>
</feature>
<comment type="interaction">
    <interactant intactId="EBI-11793223">
        <id>P0C2L3</id>
    </interactant>
    <interactant intactId="EBI-357481">
        <id>Q12959</id>
        <label>DLG1</label>
    </interactant>
    <organismsDiffer>false</organismsDiffer>
    <experiments>3</experiments>
</comment>
<comment type="interaction">
    <interactant intactId="EBI-11793223">
        <id>P0C2L3</id>
    </interactant>
    <interactant intactId="EBI-357345">
        <id>Q14160</id>
        <label>SCRIB</label>
    </interactant>
    <organismsDiffer>false</organismsDiffer>
    <experiments>3</experiments>
</comment>
<comment type="interaction">
    <interactant intactId="EBI-11793223">
        <id>P0C2L3</id>
    </interactant>
    <interactant intactId="EBI-741480">
        <id>Q9UMX0</id>
        <label>UBQLN1</label>
    </interactant>
    <organismsDiffer>false</organismsDiffer>
    <experiments>3</experiments>
</comment>
<comment type="subcellular location">
    <subcellularLocation>
        <location evidence="3">Membrane</location>
        <topology evidence="3">Single-pass membrane protein</topology>
    </subcellularLocation>
</comment>
<comment type="similarity">
    <text evidence="3">Belongs to the FAM163 family.</text>
</comment>
<keyword id="KW-0472">Membrane</keyword>
<keyword id="KW-0597">Phosphoprotein</keyword>
<keyword id="KW-1267">Proteomics identification</keyword>
<keyword id="KW-1185">Reference proteome</keyword>
<keyword id="KW-0812">Transmembrane</keyword>
<keyword id="KW-1133">Transmembrane helix</keyword>
<proteinExistence type="evidence at protein level"/>
<dbReference type="EMBL" id="BX629352">
    <property type="status" value="NOT_ANNOTATED_CDS"/>
    <property type="molecule type" value="Genomic_DNA"/>
</dbReference>
<dbReference type="EMBL" id="BC146946">
    <property type="protein sequence ID" value="AAI46947.1"/>
    <property type="molecule type" value="mRNA"/>
</dbReference>
<dbReference type="EMBL" id="BC146961">
    <property type="protein sequence ID" value="AAI46962.1"/>
    <property type="molecule type" value="mRNA"/>
</dbReference>
<dbReference type="CCDS" id="CCDS35171.1"/>
<dbReference type="RefSeq" id="NP_001073984.1">
    <property type="nucleotide sequence ID" value="NM_001080515.3"/>
</dbReference>
<dbReference type="RefSeq" id="NP_001358458.1">
    <property type="nucleotide sequence ID" value="NM_001371529.1"/>
</dbReference>
<dbReference type="RefSeq" id="XP_005272260.1">
    <property type="nucleotide sequence ID" value="XM_005272203.4"/>
</dbReference>
<dbReference type="RefSeq" id="XP_005272261.1">
    <property type="nucleotide sequence ID" value="XM_005272204.5"/>
</dbReference>
<dbReference type="RefSeq" id="XP_006717296.1">
    <property type="nucleotide sequence ID" value="XM_006717233.4"/>
</dbReference>
<dbReference type="RefSeq" id="XP_011517214.1">
    <property type="nucleotide sequence ID" value="XM_011518912.3"/>
</dbReference>
<dbReference type="RefSeq" id="XP_011517215.1">
    <property type="nucleotide sequence ID" value="XM_011518913.2"/>
</dbReference>
<dbReference type="RefSeq" id="XP_016870506.1">
    <property type="nucleotide sequence ID" value="XM_017015017.2"/>
</dbReference>
<dbReference type="RefSeq" id="XP_016870507.1">
    <property type="nucleotide sequence ID" value="XM_017015018.1"/>
</dbReference>
<dbReference type="RefSeq" id="XP_047279670.1">
    <property type="nucleotide sequence ID" value="XM_047423714.1"/>
</dbReference>
<dbReference type="RefSeq" id="XP_047279671.1">
    <property type="nucleotide sequence ID" value="XM_047423715.1"/>
</dbReference>
<dbReference type="RefSeq" id="XP_047279672.1">
    <property type="nucleotide sequence ID" value="XM_047423716.1"/>
</dbReference>
<dbReference type="RefSeq" id="XP_047279673.1">
    <property type="nucleotide sequence ID" value="XM_047423717.1"/>
</dbReference>
<dbReference type="RefSeq" id="XP_047279674.1">
    <property type="nucleotide sequence ID" value="XM_047423718.1"/>
</dbReference>
<dbReference type="RefSeq" id="XP_054219492.1">
    <property type="nucleotide sequence ID" value="XM_054363517.1"/>
</dbReference>
<dbReference type="RefSeq" id="XP_054219493.1">
    <property type="nucleotide sequence ID" value="XM_054363518.1"/>
</dbReference>
<dbReference type="RefSeq" id="XP_054219494.1">
    <property type="nucleotide sequence ID" value="XM_054363519.1"/>
</dbReference>
<dbReference type="RefSeq" id="XP_054219495.1">
    <property type="nucleotide sequence ID" value="XM_054363520.1"/>
</dbReference>
<dbReference type="RefSeq" id="XP_054219496.1">
    <property type="nucleotide sequence ID" value="XM_054363521.1"/>
</dbReference>
<dbReference type="SMR" id="P0C2L3"/>
<dbReference type="BioGRID" id="568395">
    <property type="interactions" value="17"/>
</dbReference>
<dbReference type="FunCoup" id="P0C2L3">
    <property type="interactions" value="18"/>
</dbReference>
<dbReference type="IntAct" id="P0C2L3">
    <property type="interactions" value="20"/>
</dbReference>
<dbReference type="MINT" id="P0C2L3"/>
<dbReference type="STRING" id="9606.ENSP00000501259"/>
<dbReference type="iPTMnet" id="P0C2L3"/>
<dbReference type="PhosphoSitePlus" id="P0C2L3"/>
<dbReference type="BioMuta" id="FAM163B"/>
<dbReference type="DMDM" id="134035404"/>
<dbReference type="MassIVE" id="P0C2L3"/>
<dbReference type="PaxDb" id="9606-ENSP00000349336"/>
<dbReference type="PeptideAtlas" id="P0C2L3"/>
<dbReference type="ProteomicsDB" id="52303"/>
<dbReference type="Antibodypedia" id="78020">
    <property type="antibodies" value="5 antibodies from 5 providers"/>
</dbReference>
<dbReference type="DNASU" id="642968"/>
<dbReference type="Ensembl" id="ENST00000496132.2">
    <property type="protein sequence ID" value="ENSP00000419867.1"/>
    <property type="gene ID" value="ENSG00000196990.10"/>
</dbReference>
<dbReference type="Ensembl" id="ENST00000673969.1">
    <property type="protein sequence ID" value="ENSP00000501259.1"/>
    <property type="gene ID" value="ENSG00000196990.10"/>
</dbReference>
<dbReference type="GeneID" id="642968"/>
<dbReference type="KEGG" id="hsa:642968"/>
<dbReference type="MANE-Select" id="ENST00000673969.1">
    <property type="protein sequence ID" value="ENSP00000501259.1"/>
    <property type="RefSeq nucleotide sequence ID" value="NM_001080515.3"/>
    <property type="RefSeq protein sequence ID" value="NP_001073984.1"/>
</dbReference>
<dbReference type="UCSC" id="uc011mdm.2">
    <property type="organism name" value="human"/>
</dbReference>
<dbReference type="AGR" id="HGNC:33277"/>
<dbReference type="CTD" id="642968"/>
<dbReference type="DisGeNET" id="642968"/>
<dbReference type="GeneCards" id="FAM163B"/>
<dbReference type="HGNC" id="HGNC:33277">
    <property type="gene designation" value="FAM163B"/>
</dbReference>
<dbReference type="HPA" id="ENSG00000196990">
    <property type="expression patterns" value="Tissue enriched (brain)"/>
</dbReference>
<dbReference type="neXtProt" id="NX_P0C2L3"/>
<dbReference type="OpenTargets" id="ENSG00000196990"/>
<dbReference type="PharmGKB" id="PA162386945"/>
<dbReference type="VEuPathDB" id="HostDB:ENSG00000196990"/>
<dbReference type="eggNOG" id="ENOG502RY59">
    <property type="taxonomic scope" value="Eukaryota"/>
</dbReference>
<dbReference type="GeneTree" id="ENSGT00940000159387"/>
<dbReference type="HOGENOM" id="CLU_138617_0_0_1"/>
<dbReference type="InParanoid" id="P0C2L3"/>
<dbReference type="OMA" id="DFAVHAH"/>
<dbReference type="OrthoDB" id="9937973at2759"/>
<dbReference type="PAN-GO" id="P0C2L3">
    <property type="GO annotations" value="0 GO annotations based on evolutionary models"/>
</dbReference>
<dbReference type="PhylomeDB" id="P0C2L3"/>
<dbReference type="TreeFam" id="TF333084"/>
<dbReference type="PathwayCommons" id="P0C2L3"/>
<dbReference type="SignaLink" id="P0C2L3"/>
<dbReference type="BioGRID-ORCS" id="642968">
    <property type="hits" value="21 hits in 1137 CRISPR screens"/>
</dbReference>
<dbReference type="GenomeRNAi" id="642968"/>
<dbReference type="Pharos" id="P0C2L3">
    <property type="development level" value="Tdark"/>
</dbReference>
<dbReference type="PRO" id="PR:P0C2L3"/>
<dbReference type="Proteomes" id="UP000005640">
    <property type="component" value="Chromosome 9"/>
</dbReference>
<dbReference type="RNAct" id="P0C2L3">
    <property type="molecule type" value="protein"/>
</dbReference>
<dbReference type="Bgee" id="ENSG00000196990">
    <property type="expression patterns" value="Expressed in right frontal lobe and 91 other cell types or tissues"/>
</dbReference>
<dbReference type="GO" id="GO:0016020">
    <property type="term" value="C:membrane"/>
    <property type="evidence" value="ECO:0007669"/>
    <property type="project" value="UniProtKB-SubCell"/>
</dbReference>
<dbReference type="InterPro" id="IPR029379">
    <property type="entry name" value="FAM163"/>
</dbReference>
<dbReference type="InterPro" id="IPR040280">
    <property type="entry name" value="FAM163B"/>
</dbReference>
<dbReference type="PANTHER" id="PTHR31396:SF2">
    <property type="entry name" value="PROTEIN FAM163B"/>
    <property type="match status" value="1"/>
</dbReference>
<dbReference type="PANTHER" id="PTHR31396">
    <property type="entry name" value="PROTEIN FAM163B MEMBER"/>
    <property type="match status" value="1"/>
</dbReference>
<dbReference type="Pfam" id="PF15069">
    <property type="entry name" value="FAM163"/>
    <property type="match status" value="1"/>
</dbReference>
<sequence>MTAGTVVITGGILATVILLCIIAVLCYCRLQYYCCKKDESEEDEEEPDFAVHSHLPPLHSNRNLVLTNGPALYPTASTSFSQKSPQARALCRSCSHCEPPTFFLQEPPEEEEDVLNGGERVLYKSVSQEDVELPPGGFGGLQALNPNRLSAMREAFARSRSISTDV</sequence>